<dbReference type="EC" id="2.3.1.30"/>
<dbReference type="EMBL" id="AE014075">
    <property type="protein sequence ID" value="AAN82865.1"/>
    <property type="molecule type" value="Genomic_DNA"/>
</dbReference>
<dbReference type="RefSeq" id="WP_001277561.1">
    <property type="nucleotide sequence ID" value="NZ_CP051263.1"/>
</dbReference>
<dbReference type="SMR" id="P0A9D5"/>
<dbReference type="STRING" id="199310.c4429"/>
<dbReference type="GeneID" id="93778321"/>
<dbReference type="KEGG" id="ecc:c4429"/>
<dbReference type="eggNOG" id="COG1045">
    <property type="taxonomic scope" value="Bacteria"/>
</dbReference>
<dbReference type="HOGENOM" id="CLU_051638_0_1_6"/>
<dbReference type="BioCyc" id="ECOL199310:C4429-MONOMER"/>
<dbReference type="SABIO-RK" id="P0A9D5"/>
<dbReference type="UniPathway" id="UPA00136">
    <property type="reaction ID" value="UER00199"/>
</dbReference>
<dbReference type="Proteomes" id="UP000001410">
    <property type="component" value="Chromosome"/>
</dbReference>
<dbReference type="GO" id="GO:0005737">
    <property type="term" value="C:cytoplasm"/>
    <property type="evidence" value="ECO:0007669"/>
    <property type="project" value="UniProtKB-SubCell"/>
</dbReference>
<dbReference type="GO" id="GO:0009001">
    <property type="term" value="F:serine O-acetyltransferase activity"/>
    <property type="evidence" value="ECO:0007669"/>
    <property type="project" value="UniProtKB-EC"/>
</dbReference>
<dbReference type="GO" id="GO:0006535">
    <property type="term" value="P:cysteine biosynthetic process from serine"/>
    <property type="evidence" value="ECO:0007669"/>
    <property type="project" value="InterPro"/>
</dbReference>
<dbReference type="CDD" id="cd03354">
    <property type="entry name" value="LbH_SAT"/>
    <property type="match status" value="1"/>
</dbReference>
<dbReference type="FunFam" id="1.10.3130.10:FF:000001">
    <property type="entry name" value="Acetyltransferase"/>
    <property type="match status" value="1"/>
</dbReference>
<dbReference type="FunFam" id="2.160.10.10:FF:000002">
    <property type="entry name" value="Serine acetyltransferase"/>
    <property type="match status" value="1"/>
</dbReference>
<dbReference type="Gene3D" id="2.160.10.10">
    <property type="entry name" value="Hexapeptide repeat proteins"/>
    <property type="match status" value="1"/>
</dbReference>
<dbReference type="Gene3D" id="1.10.3130.10">
    <property type="entry name" value="serine acetyltransferase, domain 1"/>
    <property type="match status" value="1"/>
</dbReference>
<dbReference type="InterPro" id="IPR001451">
    <property type="entry name" value="Hexapep"/>
</dbReference>
<dbReference type="InterPro" id="IPR018357">
    <property type="entry name" value="Hexapep_transf_CS"/>
</dbReference>
<dbReference type="InterPro" id="IPR045304">
    <property type="entry name" value="LbH_SAT"/>
</dbReference>
<dbReference type="InterPro" id="IPR010493">
    <property type="entry name" value="Ser_AcTrfase_N"/>
</dbReference>
<dbReference type="InterPro" id="IPR042122">
    <property type="entry name" value="Ser_AcTrfase_N_sf"/>
</dbReference>
<dbReference type="InterPro" id="IPR005881">
    <property type="entry name" value="Ser_O-AcTrfase"/>
</dbReference>
<dbReference type="InterPro" id="IPR053376">
    <property type="entry name" value="Serine_acetyltransferase"/>
</dbReference>
<dbReference type="InterPro" id="IPR011004">
    <property type="entry name" value="Trimer_LpxA-like_sf"/>
</dbReference>
<dbReference type="NCBIfam" id="TIGR01172">
    <property type="entry name" value="cysE"/>
    <property type="match status" value="1"/>
</dbReference>
<dbReference type="NCBIfam" id="NF041874">
    <property type="entry name" value="EPS_EpsC"/>
    <property type="match status" value="1"/>
</dbReference>
<dbReference type="NCBIfam" id="NF008349">
    <property type="entry name" value="PRK11132.1"/>
    <property type="match status" value="1"/>
</dbReference>
<dbReference type="PANTHER" id="PTHR42811">
    <property type="entry name" value="SERINE ACETYLTRANSFERASE"/>
    <property type="match status" value="1"/>
</dbReference>
<dbReference type="Pfam" id="PF00132">
    <property type="entry name" value="Hexapep"/>
    <property type="match status" value="1"/>
</dbReference>
<dbReference type="Pfam" id="PF06426">
    <property type="entry name" value="SATase_N"/>
    <property type="match status" value="1"/>
</dbReference>
<dbReference type="SMART" id="SM00971">
    <property type="entry name" value="SATase_N"/>
    <property type="match status" value="1"/>
</dbReference>
<dbReference type="SUPFAM" id="SSF51161">
    <property type="entry name" value="Trimeric LpxA-like enzymes"/>
    <property type="match status" value="1"/>
</dbReference>
<dbReference type="PROSITE" id="PS00101">
    <property type="entry name" value="HEXAPEP_TRANSFERASES"/>
    <property type="match status" value="1"/>
</dbReference>
<reference key="1">
    <citation type="journal article" date="2002" name="Proc. Natl. Acad. Sci. U.S.A.">
        <title>Extensive mosaic structure revealed by the complete genome sequence of uropathogenic Escherichia coli.</title>
        <authorList>
            <person name="Welch R.A."/>
            <person name="Burland V."/>
            <person name="Plunkett G. III"/>
            <person name="Redford P."/>
            <person name="Roesch P."/>
            <person name="Rasko D."/>
            <person name="Buckles E.L."/>
            <person name="Liou S.-R."/>
            <person name="Boutin A."/>
            <person name="Hackett J."/>
            <person name="Stroud D."/>
            <person name="Mayhew G.F."/>
            <person name="Rose D.J."/>
            <person name="Zhou S."/>
            <person name="Schwartz D.C."/>
            <person name="Perna N.T."/>
            <person name="Mobley H.L.T."/>
            <person name="Donnenberg M.S."/>
            <person name="Blattner F.R."/>
        </authorList>
    </citation>
    <scope>NUCLEOTIDE SEQUENCE [LARGE SCALE GENOMIC DNA]</scope>
    <source>
        <strain>CFT073 / ATCC 700928 / UPEC</strain>
    </source>
</reference>
<feature type="chain" id="PRO_0000068671" description="Serine acetyltransferase">
    <location>
        <begin position="1"/>
        <end position="273"/>
    </location>
</feature>
<gene>
    <name type="primary">cysE</name>
    <name type="ordered locus">c4429</name>
</gene>
<keyword id="KW-0012">Acyltransferase</keyword>
<keyword id="KW-0028">Amino-acid biosynthesis</keyword>
<keyword id="KW-0198">Cysteine biosynthesis</keyword>
<keyword id="KW-0963">Cytoplasm</keyword>
<keyword id="KW-1185">Reference proteome</keyword>
<keyword id="KW-0677">Repeat</keyword>
<keyword id="KW-0808">Transferase</keyword>
<name>CYSE_ECOL6</name>
<organism>
    <name type="scientific">Escherichia coli O6:H1 (strain CFT073 / ATCC 700928 / UPEC)</name>
    <dbReference type="NCBI Taxonomy" id="199310"/>
    <lineage>
        <taxon>Bacteria</taxon>
        <taxon>Pseudomonadati</taxon>
        <taxon>Pseudomonadota</taxon>
        <taxon>Gammaproteobacteria</taxon>
        <taxon>Enterobacterales</taxon>
        <taxon>Enterobacteriaceae</taxon>
        <taxon>Escherichia</taxon>
    </lineage>
</organism>
<accession>P0A9D5</accession>
<accession>P05796</accession>
<sequence length="273" mass="29317">MSCEELEIVWNNIKAEARTLADCEPMLASFYHATLLKHENLGSALSYMLANKLSSPIMPAIAIREVVEEAYAADPEMIASAACDIQAVRTRDPAVDKYSTPLLYLKGFHALQAYRIGHWLWNQGRRALAIFLQNQVSVTFQVDIHPAAKIGRGIMLDHATGIVVGETAVIENDVSILQSVTLGGTGKSGGDRHPKIREGVMIGAGAKILGNIEVGRGAKIGAGSVVLQPVPPHTTAAGVPARIVGKPDSDKPSMDMDQHFNGINHTFEYGDGI</sequence>
<proteinExistence type="inferred from homology"/>
<evidence type="ECO:0000250" key="1"/>
<evidence type="ECO:0000305" key="2"/>
<protein>
    <recommendedName>
        <fullName>Serine acetyltransferase</fullName>
        <shortName>SAT</shortName>
        <ecNumber>2.3.1.30</ecNumber>
    </recommendedName>
</protein>
<comment type="catalytic activity">
    <reaction>
        <text>L-serine + acetyl-CoA = O-acetyl-L-serine + CoA</text>
        <dbReference type="Rhea" id="RHEA:24560"/>
        <dbReference type="ChEBI" id="CHEBI:33384"/>
        <dbReference type="ChEBI" id="CHEBI:57287"/>
        <dbReference type="ChEBI" id="CHEBI:57288"/>
        <dbReference type="ChEBI" id="CHEBI:58340"/>
        <dbReference type="EC" id="2.3.1.30"/>
    </reaction>
</comment>
<comment type="pathway">
    <text>Amino-acid biosynthesis; L-cysteine biosynthesis; L-cysteine from L-serine: step 1/2.</text>
</comment>
<comment type="subunit">
    <text evidence="1">Homohexamer. Dimer of a homotrimer (By similarity).</text>
</comment>
<comment type="subcellular location">
    <subcellularLocation>
        <location evidence="2">Cytoplasm</location>
    </subcellularLocation>
</comment>
<comment type="similarity">
    <text evidence="2">Belongs to the transferase hexapeptide repeat family.</text>
</comment>